<comment type="function">
    <text evidence="1">Catalyzes the transfer of a methyl group from 5-methyltetrahydrofolate to homocysteine resulting in methionine formation.</text>
</comment>
<comment type="catalytic activity">
    <reaction evidence="1">
        <text>5-methyltetrahydropteroyltri-L-glutamate + L-homocysteine = tetrahydropteroyltri-L-glutamate + L-methionine</text>
        <dbReference type="Rhea" id="RHEA:21196"/>
        <dbReference type="ChEBI" id="CHEBI:57844"/>
        <dbReference type="ChEBI" id="CHEBI:58140"/>
        <dbReference type="ChEBI" id="CHEBI:58199"/>
        <dbReference type="ChEBI" id="CHEBI:58207"/>
        <dbReference type="EC" id="2.1.1.14"/>
    </reaction>
</comment>
<comment type="cofactor">
    <cofactor evidence="1">
        <name>Zn(2+)</name>
        <dbReference type="ChEBI" id="CHEBI:29105"/>
    </cofactor>
    <text evidence="1">Binds 1 zinc ion per subunit.</text>
</comment>
<comment type="pathway">
    <text evidence="1">Amino-acid biosynthesis; L-methionine biosynthesis via de novo pathway; L-methionine from L-homocysteine (MetE route): step 1/1.</text>
</comment>
<comment type="similarity">
    <text evidence="1">Belongs to the vitamin-B12 independent methionine synthase family.</text>
</comment>
<evidence type="ECO:0000255" key="1">
    <source>
        <dbReference type="HAMAP-Rule" id="MF_00172"/>
    </source>
</evidence>
<sequence>MTTIKTSNLGFPRLGRKREWKKAIESYWAKKISKEELDQTLTDLHKENLLLQKYYHLDSIPVGDFSLYDHILDTSLLFNIIPERFQGRTIDDDLLFDIARGNKDHVASALIKWFNTNYHYIVPEWDNVEPKVSRNVLLDRFKYAQSLNVNAHPVIVGPITFVKLSKGGHQTFEEKVKTLLPLYKEVFESLIDAGAEYIQVDEPILVTDDSESYENITREAYDYFEKAGVAKKLVIQTYFERAHLKFLSSLPVGGLGLDFVHDNGYNLKQIEAGDFDKSKTLYAGIIDGRNVWASDIEAKKVLIDKLLAHTNELVIQPSSSLLHVPVSLDDETLDTSVGEGLSFATEKLDELDALRRLLNQNDSVKYDKLKARYERFQNQSFKNLDYDFESVRTSRQSPFAQRIEQQQKRLNLPDLPTTTIGSFPQSREVRKYRADWKNKRITDEAYETFLKNEIARWIKIQEDIGLDVLVHGEFERNDMVEFFGEKLQGFLVTKFGWVQSYGSRAVKPPIIYGDVKWTAPLTVDETVYAQSLTDKPVKGMLTGPVTILNWSFERVDLPRKVVQDQIALAINEEVLALEAAGIKVIQVDEPALREGLPLRSEYHEQYLKDAVLSFKLATSSVRDETQIHTHMCYSQFGQIIHAIHDLDADVISIETSRSHGDLIKDFEDINYDLGIGLGVYDIHSPRIPTKEEITTAINRSLQQIDRSLFWVNPDCGLKTRKEEEVKDALTVLVNAVKAKRQE</sequence>
<name>METE_STAAN</name>
<accession>P65343</accession>
<accession>Q99WM1</accession>
<dbReference type="EC" id="2.1.1.14" evidence="1"/>
<dbReference type="EMBL" id="BA000018">
    <property type="protein sequence ID" value="BAB41568.1"/>
    <property type="molecule type" value="Genomic_DNA"/>
</dbReference>
<dbReference type="PIR" id="E89801">
    <property type="entry name" value="E89801"/>
</dbReference>
<dbReference type="RefSeq" id="WP_000207623.1">
    <property type="nucleotide sequence ID" value="NC_002745.2"/>
</dbReference>
<dbReference type="SMR" id="P65343"/>
<dbReference type="EnsemblBacteria" id="BAB41568">
    <property type="protein sequence ID" value="BAB41568"/>
    <property type="gene ID" value="BAB41568"/>
</dbReference>
<dbReference type="KEGG" id="sau:SA0344"/>
<dbReference type="HOGENOM" id="CLU_013175_0_0_9"/>
<dbReference type="UniPathway" id="UPA00051">
    <property type="reaction ID" value="UER00082"/>
</dbReference>
<dbReference type="GO" id="GO:0003871">
    <property type="term" value="F:5-methyltetrahydropteroyltriglutamate-homocysteine S-methyltransferase activity"/>
    <property type="evidence" value="ECO:0007669"/>
    <property type="project" value="UniProtKB-UniRule"/>
</dbReference>
<dbReference type="GO" id="GO:0008270">
    <property type="term" value="F:zinc ion binding"/>
    <property type="evidence" value="ECO:0007669"/>
    <property type="project" value="InterPro"/>
</dbReference>
<dbReference type="GO" id="GO:0009086">
    <property type="term" value="P:methionine biosynthetic process"/>
    <property type="evidence" value="ECO:0007669"/>
    <property type="project" value="UniProtKB-UniRule"/>
</dbReference>
<dbReference type="GO" id="GO:0032259">
    <property type="term" value="P:methylation"/>
    <property type="evidence" value="ECO:0007669"/>
    <property type="project" value="UniProtKB-KW"/>
</dbReference>
<dbReference type="CDD" id="cd03311">
    <property type="entry name" value="CIMS_C_terminal_like"/>
    <property type="match status" value="1"/>
</dbReference>
<dbReference type="CDD" id="cd03312">
    <property type="entry name" value="CIMS_N_terminal_like"/>
    <property type="match status" value="1"/>
</dbReference>
<dbReference type="Gene3D" id="3.20.20.210">
    <property type="match status" value="2"/>
</dbReference>
<dbReference type="HAMAP" id="MF_00172">
    <property type="entry name" value="Meth_synth"/>
    <property type="match status" value="1"/>
</dbReference>
<dbReference type="InterPro" id="IPR013215">
    <property type="entry name" value="Cbl-indep_Met_Synth_N"/>
</dbReference>
<dbReference type="InterPro" id="IPR006276">
    <property type="entry name" value="Cobalamin-indep_Met_synthase"/>
</dbReference>
<dbReference type="InterPro" id="IPR002629">
    <property type="entry name" value="Met_Synth_C/arc"/>
</dbReference>
<dbReference type="InterPro" id="IPR038071">
    <property type="entry name" value="UROD/MetE-like_sf"/>
</dbReference>
<dbReference type="NCBIfam" id="TIGR01371">
    <property type="entry name" value="met_syn_B12ind"/>
    <property type="match status" value="1"/>
</dbReference>
<dbReference type="NCBIfam" id="NF003556">
    <property type="entry name" value="PRK05222.1"/>
    <property type="match status" value="1"/>
</dbReference>
<dbReference type="PANTHER" id="PTHR30519">
    <property type="entry name" value="5-METHYLTETRAHYDROPTEROYLTRIGLUTAMATE--HOMOCYSTEINE METHYLTRANSFERASE"/>
    <property type="match status" value="1"/>
</dbReference>
<dbReference type="Pfam" id="PF08267">
    <property type="entry name" value="Meth_synt_1"/>
    <property type="match status" value="1"/>
</dbReference>
<dbReference type="Pfam" id="PF01717">
    <property type="entry name" value="Meth_synt_2"/>
    <property type="match status" value="1"/>
</dbReference>
<dbReference type="PIRSF" id="PIRSF000382">
    <property type="entry name" value="MeTrfase_B12_ind"/>
    <property type="match status" value="1"/>
</dbReference>
<dbReference type="SUPFAM" id="SSF51726">
    <property type="entry name" value="UROD/MetE-like"/>
    <property type="match status" value="2"/>
</dbReference>
<protein>
    <recommendedName>
        <fullName evidence="1">5-methyltetrahydropteroyltriglutamate--homocysteine methyltransferase</fullName>
        <ecNumber evidence="1">2.1.1.14</ecNumber>
    </recommendedName>
    <alternativeName>
        <fullName evidence="1">Cobalamin-independent methionine synthase</fullName>
    </alternativeName>
    <alternativeName>
        <fullName evidence="1">Methionine synthase, vitamin-B12 independent isozyme</fullName>
    </alternativeName>
</protein>
<reference key="1">
    <citation type="journal article" date="2001" name="Lancet">
        <title>Whole genome sequencing of meticillin-resistant Staphylococcus aureus.</title>
        <authorList>
            <person name="Kuroda M."/>
            <person name="Ohta T."/>
            <person name="Uchiyama I."/>
            <person name="Baba T."/>
            <person name="Yuzawa H."/>
            <person name="Kobayashi I."/>
            <person name="Cui L."/>
            <person name="Oguchi A."/>
            <person name="Aoki K."/>
            <person name="Nagai Y."/>
            <person name="Lian J.-Q."/>
            <person name="Ito T."/>
            <person name="Kanamori M."/>
            <person name="Matsumaru H."/>
            <person name="Maruyama A."/>
            <person name="Murakami H."/>
            <person name="Hosoyama A."/>
            <person name="Mizutani-Ui Y."/>
            <person name="Takahashi N.K."/>
            <person name="Sawano T."/>
            <person name="Inoue R."/>
            <person name="Kaito C."/>
            <person name="Sekimizu K."/>
            <person name="Hirakawa H."/>
            <person name="Kuhara S."/>
            <person name="Goto S."/>
            <person name="Yabuzaki J."/>
            <person name="Kanehisa M."/>
            <person name="Yamashita A."/>
            <person name="Oshima K."/>
            <person name="Furuya K."/>
            <person name="Yoshino C."/>
            <person name="Shiba T."/>
            <person name="Hattori M."/>
            <person name="Ogasawara N."/>
            <person name="Hayashi H."/>
            <person name="Hiramatsu K."/>
        </authorList>
    </citation>
    <scope>NUCLEOTIDE SEQUENCE [LARGE SCALE GENOMIC DNA]</scope>
    <source>
        <strain>N315</strain>
    </source>
</reference>
<gene>
    <name evidence="1" type="primary">metE</name>
    <name type="ordered locus">SA0344</name>
</gene>
<organism>
    <name type="scientific">Staphylococcus aureus (strain N315)</name>
    <dbReference type="NCBI Taxonomy" id="158879"/>
    <lineage>
        <taxon>Bacteria</taxon>
        <taxon>Bacillati</taxon>
        <taxon>Bacillota</taxon>
        <taxon>Bacilli</taxon>
        <taxon>Bacillales</taxon>
        <taxon>Staphylococcaceae</taxon>
        <taxon>Staphylococcus</taxon>
    </lineage>
</organism>
<feature type="chain" id="PRO_0000098660" description="5-methyltetrahydropteroyltriglutamate--homocysteine methyltransferase">
    <location>
        <begin position="1"/>
        <end position="742"/>
    </location>
</feature>
<feature type="active site" description="Proton donor" evidence="1">
    <location>
        <position position="683"/>
    </location>
</feature>
<feature type="binding site" evidence="1">
    <location>
        <begin position="18"/>
        <end position="21"/>
    </location>
    <ligand>
        <name>5-methyltetrahydropteroyltri-L-glutamate</name>
        <dbReference type="ChEBI" id="CHEBI:58207"/>
    </ligand>
</feature>
<feature type="binding site" evidence="1">
    <location>
        <position position="112"/>
    </location>
    <ligand>
        <name>5-methyltetrahydropteroyltri-L-glutamate</name>
        <dbReference type="ChEBI" id="CHEBI:58207"/>
    </ligand>
</feature>
<feature type="binding site" evidence="1">
    <location>
        <begin position="420"/>
        <end position="422"/>
    </location>
    <ligand>
        <name>L-homocysteine</name>
        <dbReference type="ChEBI" id="CHEBI:58199"/>
    </ligand>
</feature>
<feature type="binding site" evidence="1">
    <location>
        <begin position="420"/>
        <end position="422"/>
    </location>
    <ligand>
        <name>L-methionine</name>
        <dbReference type="ChEBI" id="CHEBI:57844"/>
    </ligand>
</feature>
<feature type="binding site" evidence="1">
    <location>
        <position position="473"/>
    </location>
    <ligand>
        <name>L-homocysteine</name>
        <dbReference type="ChEBI" id="CHEBI:58199"/>
    </ligand>
</feature>
<feature type="binding site" evidence="1">
    <location>
        <position position="473"/>
    </location>
    <ligand>
        <name>L-methionine</name>
        <dbReference type="ChEBI" id="CHEBI:57844"/>
    </ligand>
</feature>
<feature type="binding site" evidence="1">
    <location>
        <position position="550"/>
    </location>
    <ligand>
        <name>5-methyltetrahydropteroyltri-L-glutamate</name>
        <dbReference type="ChEBI" id="CHEBI:58207"/>
    </ligand>
</feature>
<feature type="binding site" evidence="1">
    <location>
        <position position="588"/>
    </location>
    <ligand>
        <name>L-homocysteine</name>
        <dbReference type="ChEBI" id="CHEBI:58199"/>
    </ligand>
</feature>
<feature type="binding site" evidence="1">
    <location>
        <position position="588"/>
    </location>
    <ligand>
        <name>L-methionine</name>
        <dbReference type="ChEBI" id="CHEBI:57844"/>
    </ligand>
</feature>
<feature type="binding site" evidence="1">
    <location>
        <position position="594"/>
    </location>
    <ligand>
        <name>5-methyltetrahydropteroyltri-L-glutamate</name>
        <dbReference type="ChEBI" id="CHEBI:58207"/>
    </ligand>
</feature>
<feature type="binding site" evidence="1">
    <location>
        <position position="630"/>
    </location>
    <ligand>
        <name>Zn(2+)</name>
        <dbReference type="ChEBI" id="CHEBI:29105"/>
        <note>catalytic</note>
    </ligand>
</feature>
<feature type="binding site" evidence="1">
    <location>
        <position position="632"/>
    </location>
    <ligand>
        <name>Zn(2+)</name>
        <dbReference type="ChEBI" id="CHEBI:29105"/>
        <note>catalytic</note>
    </ligand>
</feature>
<feature type="binding site" evidence="1">
    <location>
        <position position="654"/>
    </location>
    <ligand>
        <name>Zn(2+)</name>
        <dbReference type="ChEBI" id="CHEBI:29105"/>
        <note>catalytic</note>
    </ligand>
</feature>
<feature type="binding site" evidence="1">
    <location>
        <position position="715"/>
    </location>
    <ligand>
        <name>Zn(2+)</name>
        <dbReference type="ChEBI" id="CHEBI:29105"/>
        <note>catalytic</note>
    </ligand>
</feature>
<keyword id="KW-0028">Amino-acid biosynthesis</keyword>
<keyword id="KW-0479">Metal-binding</keyword>
<keyword id="KW-0486">Methionine biosynthesis</keyword>
<keyword id="KW-0489">Methyltransferase</keyword>
<keyword id="KW-0677">Repeat</keyword>
<keyword id="KW-0808">Transferase</keyword>
<keyword id="KW-0862">Zinc</keyword>
<proteinExistence type="inferred from homology"/>